<dbReference type="EC" id="1.15.1.1"/>
<dbReference type="EMBL" id="L28808">
    <property type="protein sequence ID" value="AAA31401.1"/>
    <property type="molecule type" value="mRNA"/>
</dbReference>
<dbReference type="SMR" id="P41982"/>
<dbReference type="FunCoup" id="P41982">
    <property type="interactions" value="991"/>
</dbReference>
<dbReference type="InParanoid" id="P41982"/>
<dbReference type="Proteomes" id="UP000001811">
    <property type="component" value="Unplaced"/>
</dbReference>
<dbReference type="GO" id="GO:0005759">
    <property type="term" value="C:mitochondrial matrix"/>
    <property type="evidence" value="ECO:0007669"/>
    <property type="project" value="UniProtKB-SubCell"/>
</dbReference>
<dbReference type="GO" id="GO:0030145">
    <property type="term" value="F:manganese ion binding"/>
    <property type="evidence" value="ECO:0000250"/>
    <property type="project" value="UniProtKB"/>
</dbReference>
<dbReference type="GO" id="GO:0004784">
    <property type="term" value="F:superoxide dismutase activity"/>
    <property type="evidence" value="ECO:0000250"/>
    <property type="project" value="UniProtKB"/>
</dbReference>
<dbReference type="FunFam" id="1.10.287.990:FF:000001">
    <property type="entry name" value="Superoxide dismutase"/>
    <property type="match status" value="1"/>
</dbReference>
<dbReference type="FunFam" id="3.55.40.20:FF:000003">
    <property type="entry name" value="Superoxide dismutase [Mn], mitochondrial"/>
    <property type="match status" value="1"/>
</dbReference>
<dbReference type="Gene3D" id="1.10.287.990">
    <property type="entry name" value="Fe,Mn superoxide dismutase (SOD) domain"/>
    <property type="match status" value="1"/>
</dbReference>
<dbReference type="Gene3D" id="3.55.40.20">
    <property type="entry name" value="Iron/manganese superoxide dismutase, C-terminal domain"/>
    <property type="match status" value="1"/>
</dbReference>
<dbReference type="InterPro" id="IPR050265">
    <property type="entry name" value="Fe/Mn_Superoxide_Dismutase"/>
</dbReference>
<dbReference type="InterPro" id="IPR001189">
    <property type="entry name" value="Mn/Fe_SOD"/>
</dbReference>
<dbReference type="InterPro" id="IPR019833">
    <property type="entry name" value="Mn/Fe_SOD_BS"/>
</dbReference>
<dbReference type="InterPro" id="IPR019832">
    <property type="entry name" value="Mn/Fe_SOD_C"/>
</dbReference>
<dbReference type="InterPro" id="IPR019831">
    <property type="entry name" value="Mn/Fe_SOD_N"/>
</dbReference>
<dbReference type="InterPro" id="IPR036324">
    <property type="entry name" value="Mn/Fe_SOD_N_sf"/>
</dbReference>
<dbReference type="InterPro" id="IPR036314">
    <property type="entry name" value="SOD_C_sf"/>
</dbReference>
<dbReference type="PANTHER" id="PTHR11404">
    <property type="entry name" value="SUPEROXIDE DISMUTASE 2"/>
    <property type="match status" value="1"/>
</dbReference>
<dbReference type="PANTHER" id="PTHR11404:SF6">
    <property type="entry name" value="SUPEROXIDE DISMUTASE [MN], MITOCHONDRIAL"/>
    <property type="match status" value="1"/>
</dbReference>
<dbReference type="Pfam" id="PF02777">
    <property type="entry name" value="Sod_Fe_C"/>
    <property type="match status" value="1"/>
</dbReference>
<dbReference type="Pfam" id="PF00081">
    <property type="entry name" value="Sod_Fe_N"/>
    <property type="match status" value="1"/>
</dbReference>
<dbReference type="PIRSF" id="PIRSF000349">
    <property type="entry name" value="SODismutase"/>
    <property type="match status" value="1"/>
</dbReference>
<dbReference type="PRINTS" id="PR01703">
    <property type="entry name" value="MNSODISMTASE"/>
</dbReference>
<dbReference type="SUPFAM" id="SSF54719">
    <property type="entry name" value="Fe,Mn superoxide dismutase (SOD), C-terminal domain"/>
    <property type="match status" value="1"/>
</dbReference>
<dbReference type="SUPFAM" id="SSF46609">
    <property type="entry name" value="Fe,Mn superoxide dismutase (SOD), N-terminal domain"/>
    <property type="match status" value="1"/>
</dbReference>
<dbReference type="PROSITE" id="PS00088">
    <property type="entry name" value="SOD_MN"/>
    <property type="match status" value="1"/>
</dbReference>
<sequence>HGRGMKHSLPDLPYDYGALEPHINAQIMELHHSKHHAAYVNNLNATEEKYREALARGDVTAHVALQPALKFKGGGHINHTIFWTNLSPNGGGEPKGELLEAIKRDFGSFDKFKERLTAVSVGVQGSGWGWLGFNKEQGHLQIAACANQDPLQGTTGLIPLLGIDVWEHAYYLQYKNVRPDYLKAIWNVITWENVTERYMACK</sequence>
<comment type="function">
    <text evidence="3">Destroys superoxide anion radicals which are normally produced within the cells and which are toxic to biological systems.</text>
</comment>
<comment type="catalytic activity">
    <reaction>
        <text>2 superoxide + 2 H(+) = H2O2 + O2</text>
        <dbReference type="Rhea" id="RHEA:20696"/>
        <dbReference type="ChEBI" id="CHEBI:15378"/>
        <dbReference type="ChEBI" id="CHEBI:15379"/>
        <dbReference type="ChEBI" id="CHEBI:16240"/>
        <dbReference type="ChEBI" id="CHEBI:18421"/>
        <dbReference type="EC" id="1.15.1.1"/>
    </reaction>
</comment>
<comment type="cofactor">
    <cofactor evidence="2">
        <name>Mn(2+)</name>
        <dbReference type="ChEBI" id="CHEBI:29035"/>
    </cofactor>
    <text evidence="2">Binds 1 Mn(2+) ion per subunit.</text>
</comment>
<comment type="subunit">
    <text evidence="1">Homotetramer.</text>
</comment>
<comment type="subcellular location">
    <subcellularLocation>
        <location>Mitochondrion matrix</location>
    </subcellularLocation>
</comment>
<comment type="PTM">
    <text evidence="3">Nitrated under oxidative stress. Nitration coupled with oxidation inhibits the catalytic activity.</text>
</comment>
<comment type="PTM">
    <text evidence="2">Acetylation at Lys-122 decreases enzymatic activity. Deacetylated by SIRT3 upon exposure to ionizing radiations or after long fasting (By similarity).</text>
</comment>
<comment type="PTM">
    <text evidence="2">Polyubiquitinated; leading to proteasomal degradation. Deubiquitinated by USP36 which increases protein stability.</text>
</comment>
<comment type="similarity">
    <text evidence="5">Belongs to the iron/manganese superoxide dismutase family.</text>
</comment>
<evidence type="ECO:0000250" key="1"/>
<evidence type="ECO:0000250" key="2">
    <source>
        <dbReference type="UniProtKB" id="P04179"/>
    </source>
</evidence>
<evidence type="ECO:0000250" key="3">
    <source>
        <dbReference type="UniProtKB" id="P07895"/>
    </source>
</evidence>
<evidence type="ECO:0000250" key="4">
    <source>
        <dbReference type="UniProtKB" id="P09671"/>
    </source>
</evidence>
<evidence type="ECO:0000305" key="5"/>
<name>SODM_RABIT</name>
<accession>P41982</accession>
<organism>
    <name type="scientific">Oryctolagus cuniculus</name>
    <name type="common">Rabbit</name>
    <dbReference type="NCBI Taxonomy" id="9986"/>
    <lineage>
        <taxon>Eukaryota</taxon>
        <taxon>Metazoa</taxon>
        <taxon>Chordata</taxon>
        <taxon>Craniata</taxon>
        <taxon>Vertebrata</taxon>
        <taxon>Euteleostomi</taxon>
        <taxon>Mammalia</taxon>
        <taxon>Eutheria</taxon>
        <taxon>Euarchontoglires</taxon>
        <taxon>Glires</taxon>
        <taxon>Lagomorpha</taxon>
        <taxon>Leporidae</taxon>
        <taxon>Oryctolagus</taxon>
    </lineage>
</organism>
<keyword id="KW-0007">Acetylation</keyword>
<keyword id="KW-0464">Manganese</keyword>
<keyword id="KW-0479">Metal-binding</keyword>
<keyword id="KW-0496">Mitochondrion</keyword>
<keyword id="KW-0944">Nitration</keyword>
<keyword id="KW-0560">Oxidoreductase</keyword>
<keyword id="KW-1185">Reference proteome</keyword>
<keyword id="KW-0809">Transit peptide</keyword>
<keyword id="KW-0832">Ubl conjugation</keyword>
<gene>
    <name type="primary">SOD2</name>
</gene>
<feature type="transit peptide" description="Mitochondrion" evidence="1">
    <location>
        <begin position="1" status="less than"/>
        <end position="5"/>
    </location>
</feature>
<feature type="chain" id="PRO_0000032873" description="Superoxide dismutase [Mn], mitochondrial">
    <location>
        <begin position="6"/>
        <end position="202" status="greater than"/>
    </location>
</feature>
<feature type="binding site" evidence="1">
    <location>
        <position position="31"/>
    </location>
    <ligand>
        <name>Mn(2+)</name>
        <dbReference type="ChEBI" id="CHEBI:29035"/>
    </ligand>
</feature>
<feature type="binding site" evidence="1">
    <location>
        <position position="79"/>
    </location>
    <ligand>
        <name>Mn(2+)</name>
        <dbReference type="ChEBI" id="CHEBI:29035"/>
    </ligand>
</feature>
<feature type="binding site" evidence="1">
    <location>
        <position position="164"/>
    </location>
    <ligand>
        <name>Mn(2+)</name>
        <dbReference type="ChEBI" id="CHEBI:29035"/>
    </ligand>
</feature>
<feature type="binding site" evidence="1">
    <location>
        <position position="168"/>
    </location>
    <ligand>
        <name>Mn(2+)</name>
        <dbReference type="ChEBI" id="CHEBI:29035"/>
    </ligand>
</feature>
<feature type="modified residue" description="3'-nitrotyrosine" evidence="2">
    <location>
        <position position="39"/>
    </location>
</feature>
<feature type="modified residue" description="N6-acetyllysine; alternate" evidence="2">
    <location>
        <position position="49"/>
    </location>
</feature>
<feature type="modified residue" description="N6-succinyllysine; alternate" evidence="4">
    <location>
        <position position="49"/>
    </location>
</feature>
<feature type="modified residue" description="N6-acetyllysine" evidence="4">
    <location>
        <position position="95"/>
    </location>
</feature>
<feature type="modified residue" description="N6-acetyllysine; alternate" evidence="4">
    <location>
        <position position="103"/>
    </location>
</feature>
<feature type="modified residue" description="N6-succinyllysine; alternate" evidence="4">
    <location>
        <position position="103"/>
    </location>
</feature>
<feature type="modified residue" description="N6-acetyllysine; alternate" evidence="2">
    <location>
        <position position="111"/>
    </location>
</feature>
<feature type="modified residue" description="N6-succinyllysine; alternate" evidence="4">
    <location>
        <position position="111"/>
    </location>
</feature>
<feature type="modified residue" description="N6-acetyllysine" evidence="4">
    <location>
        <position position="183"/>
    </location>
</feature>
<feature type="non-terminal residue">
    <location>
        <position position="1"/>
    </location>
</feature>
<feature type="non-terminal residue">
    <location>
        <position position="202"/>
    </location>
</feature>
<proteinExistence type="evidence at transcript level"/>
<protein>
    <recommendedName>
        <fullName>Superoxide dismutase [Mn], mitochondrial</fullName>
        <ecNumber>1.15.1.1</ecNumber>
    </recommendedName>
</protein>
<reference key="1">
    <citation type="submission" date="1994-05" db="EMBL/GenBank/DDBJ databases">
        <authorList>
            <person name="Jackson R.M."/>
        </authorList>
    </citation>
    <scope>NUCLEOTIDE SEQUENCE [MRNA]</scope>
    <source>
        <strain>New Zealand white</strain>
    </source>
</reference>